<comment type="subcellular location">
    <subcellularLocation>
        <location evidence="1">Spore core</location>
    </subcellularLocation>
</comment>
<comment type="induction">
    <text evidence="1">Expressed only in the forespore compartment of sporulating cells.</text>
</comment>
<comment type="similarity">
    <text evidence="1">Belongs to the Tlp family.</text>
</comment>
<keyword id="KW-0749">Sporulation</keyword>
<sequence length="65" mass="7466">MPNPDNRSDNAEKLQEMVQNTIDNFNEAKETAELSNEKDRSAIEAKNQRRLESIDSLKSEIKDES</sequence>
<gene>
    <name evidence="1" type="primary">tlp</name>
    <name type="ordered locus">BCQ_3402</name>
</gene>
<accession>B9IUC0</accession>
<evidence type="ECO:0000255" key="1">
    <source>
        <dbReference type="HAMAP-Rule" id="MF_01506"/>
    </source>
</evidence>
<name>TLP_BACCQ</name>
<organism>
    <name type="scientific">Bacillus cereus (strain Q1)</name>
    <dbReference type="NCBI Taxonomy" id="361100"/>
    <lineage>
        <taxon>Bacteria</taxon>
        <taxon>Bacillati</taxon>
        <taxon>Bacillota</taxon>
        <taxon>Bacilli</taxon>
        <taxon>Bacillales</taxon>
        <taxon>Bacillaceae</taxon>
        <taxon>Bacillus</taxon>
        <taxon>Bacillus cereus group</taxon>
    </lineage>
</organism>
<proteinExistence type="inferred from homology"/>
<reference key="1">
    <citation type="journal article" date="2009" name="J. Bacteriol.">
        <title>Complete genome sequence of the extremophilic Bacillus cereus strain Q1 with industrial applications.</title>
        <authorList>
            <person name="Xiong Z."/>
            <person name="Jiang Y."/>
            <person name="Qi D."/>
            <person name="Lu H."/>
            <person name="Yang F."/>
            <person name="Yang J."/>
            <person name="Chen L."/>
            <person name="Sun L."/>
            <person name="Xu X."/>
            <person name="Xue Y."/>
            <person name="Zhu Y."/>
            <person name="Jin Q."/>
        </authorList>
    </citation>
    <scope>NUCLEOTIDE SEQUENCE [LARGE SCALE GENOMIC DNA]</scope>
    <source>
        <strain>Q1</strain>
    </source>
</reference>
<feature type="chain" id="PRO_1000185033" description="Small, acid-soluble spore protein Tlp">
    <location>
        <begin position="1"/>
        <end position="65"/>
    </location>
</feature>
<protein>
    <recommendedName>
        <fullName evidence="1">Small, acid-soluble spore protein Tlp</fullName>
    </recommendedName>
</protein>
<dbReference type="EMBL" id="CP000227">
    <property type="protein sequence ID" value="ACM13830.1"/>
    <property type="molecule type" value="Genomic_DNA"/>
</dbReference>
<dbReference type="SMR" id="B9IUC0"/>
<dbReference type="KEGG" id="bcq:BCQ_3402"/>
<dbReference type="HOGENOM" id="CLU_178266_1_0_9"/>
<dbReference type="Proteomes" id="UP000000441">
    <property type="component" value="Chromosome"/>
</dbReference>
<dbReference type="GO" id="GO:0030436">
    <property type="term" value="P:asexual sporulation"/>
    <property type="evidence" value="ECO:0007669"/>
    <property type="project" value="UniProtKB-UniRule"/>
</dbReference>
<dbReference type="GO" id="GO:0030435">
    <property type="term" value="P:sporulation resulting in formation of a cellular spore"/>
    <property type="evidence" value="ECO:0007669"/>
    <property type="project" value="UniProtKB-KW"/>
</dbReference>
<dbReference type="HAMAP" id="MF_01506">
    <property type="entry name" value="Tlp"/>
    <property type="match status" value="1"/>
</dbReference>
<dbReference type="InterPro" id="IPR017524">
    <property type="entry name" value="SASP_thioredoxin-like"/>
</dbReference>
<dbReference type="NCBIfam" id="TIGR03090">
    <property type="entry name" value="SASP_tlp"/>
    <property type="match status" value="1"/>
</dbReference>
<dbReference type="Pfam" id="PF19824">
    <property type="entry name" value="Tlp"/>
    <property type="match status" value="1"/>
</dbReference>